<organism>
    <name type="scientific">Nocardioides sp. (strain ATCC BAA-499 / JS614)</name>
    <dbReference type="NCBI Taxonomy" id="196162"/>
    <lineage>
        <taxon>Bacteria</taxon>
        <taxon>Bacillati</taxon>
        <taxon>Actinomycetota</taxon>
        <taxon>Actinomycetes</taxon>
        <taxon>Propionibacteriales</taxon>
        <taxon>Nocardioidaceae</taxon>
        <taxon>Nocardioides</taxon>
    </lineage>
</organism>
<proteinExistence type="inferred from homology"/>
<gene>
    <name evidence="1" type="primary">tsf</name>
    <name type="ordered locus">Noca_3242</name>
</gene>
<evidence type="ECO:0000255" key="1">
    <source>
        <dbReference type="HAMAP-Rule" id="MF_00050"/>
    </source>
</evidence>
<reference key="1">
    <citation type="submission" date="2006-12" db="EMBL/GenBank/DDBJ databases">
        <title>Complete sequence of chromosome 1 of Nocardioides sp. JS614.</title>
        <authorList>
            <person name="Copeland A."/>
            <person name="Lucas S."/>
            <person name="Lapidus A."/>
            <person name="Barry K."/>
            <person name="Detter J.C."/>
            <person name="Glavina del Rio T."/>
            <person name="Hammon N."/>
            <person name="Israni S."/>
            <person name="Dalin E."/>
            <person name="Tice H."/>
            <person name="Pitluck S."/>
            <person name="Thompson L.S."/>
            <person name="Brettin T."/>
            <person name="Bruce D."/>
            <person name="Han C."/>
            <person name="Tapia R."/>
            <person name="Schmutz J."/>
            <person name="Larimer F."/>
            <person name="Land M."/>
            <person name="Hauser L."/>
            <person name="Kyrpides N."/>
            <person name="Kim E."/>
            <person name="Mattes T."/>
            <person name="Gossett J."/>
            <person name="Richardson P."/>
        </authorList>
    </citation>
    <scope>NUCLEOTIDE SEQUENCE [LARGE SCALE GENOMIC DNA]</scope>
    <source>
        <strain>ATCC BAA-499 / JS614</strain>
    </source>
</reference>
<keyword id="KW-0963">Cytoplasm</keyword>
<keyword id="KW-0251">Elongation factor</keyword>
<keyword id="KW-0648">Protein biosynthesis</keyword>
<keyword id="KW-1185">Reference proteome</keyword>
<accession>A1SLQ9</accession>
<feature type="chain" id="PRO_1000006139" description="Elongation factor Ts">
    <location>
        <begin position="1"/>
        <end position="270"/>
    </location>
</feature>
<feature type="region of interest" description="Involved in Mg(2+) ion dislocation from EF-Tu" evidence="1">
    <location>
        <begin position="77"/>
        <end position="80"/>
    </location>
</feature>
<name>EFTS_NOCSJ</name>
<comment type="function">
    <text evidence="1">Associates with the EF-Tu.GDP complex and induces the exchange of GDP to GTP. It remains bound to the aminoacyl-tRNA.EF-Tu.GTP complex up to the GTP hydrolysis stage on the ribosome.</text>
</comment>
<comment type="subcellular location">
    <subcellularLocation>
        <location evidence="1">Cytoplasm</location>
    </subcellularLocation>
</comment>
<comment type="similarity">
    <text evidence="1">Belongs to the EF-Ts family.</text>
</comment>
<protein>
    <recommendedName>
        <fullName evidence="1">Elongation factor Ts</fullName>
        <shortName evidence="1">EF-Ts</shortName>
    </recommendedName>
</protein>
<dbReference type="EMBL" id="CP000509">
    <property type="protein sequence ID" value="ABL82744.1"/>
    <property type="molecule type" value="Genomic_DNA"/>
</dbReference>
<dbReference type="RefSeq" id="WP_011756678.1">
    <property type="nucleotide sequence ID" value="NC_008699.1"/>
</dbReference>
<dbReference type="SMR" id="A1SLQ9"/>
<dbReference type="STRING" id="196162.Noca_3242"/>
<dbReference type="KEGG" id="nca:Noca_3242"/>
<dbReference type="eggNOG" id="COG0264">
    <property type="taxonomic scope" value="Bacteria"/>
</dbReference>
<dbReference type="HOGENOM" id="CLU_047155_0_0_11"/>
<dbReference type="OrthoDB" id="9808348at2"/>
<dbReference type="Proteomes" id="UP000000640">
    <property type="component" value="Chromosome"/>
</dbReference>
<dbReference type="GO" id="GO:0005737">
    <property type="term" value="C:cytoplasm"/>
    <property type="evidence" value="ECO:0007669"/>
    <property type="project" value="UniProtKB-SubCell"/>
</dbReference>
<dbReference type="GO" id="GO:0003746">
    <property type="term" value="F:translation elongation factor activity"/>
    <property type="evidence" value="ECO:0007669"/>
    <property type="project" value="UniProtKB-UniRule"/>
</dbReference>
<dbReference type="CDD" id="cd14275">
    <property type="entry name" value="UBA_EF-Ts"/>
    <property type="match status" value="1"/>
</dbReference>
<dbReference type="FunFam" id="1.10.286.20:FF:000001">
    <property type="entry name" value="Elongation factor Ts"/>
    <property type="match status" value="1"/>
</dbReference>
<dbReference type="FunFam" id="1.10.8.10:FF:000001">
    <property type="entry name" value="Elongation factor Ts"/>
    <property type="match status" value="1"/>
</dbReference>
<dbReference type="Gene3D" id="1.10.286.20">
    <property type="match status" value="1"/>
</dbReference>
<dbReference type="Gene3D" id="1.10.8.10">
    <property type="entry name" value="DNA helicase RuvA subunit, C-terminal domain"/>
    <property type="match status" value="1"/>
</dbReference>
<dbReference type="Gene3D" id="3.30.479.20">
    <property type="entry name" value="Elongation factor Ts, dimerisation domain"/>
    <property type="match status" value="2"/>
</dbReference>
<dbReference type="HAMAP" id="MF_00050">
    <property type="entry name" value="EF_Ts"/>
    <property type="match status" value="1"/>
</dbReference>
<dbReference type="InterPro" id="IPR036402">
    <property type="entry name" value="EF-Ts_dimer_sf"/>
</dbReference>
<dbReference type="InterPro" id="IPR001816">
    <property type="entry name" value="Transl_elong_EFTs/EF1B"/>
</dbReference>
<dbReference type="InterPro" id="IPR014039">
    <property type="entry name" value="Transl_elong_EFTs/EF1B_dimer"/>
</dbReference>
<dbReference type="InterPro" id="IPR018101">
    <property type="entry name" value="Transl_elong_Ts_CS"/>
</dbReference>
<dbReference type="InterPro" id="IPR009060">
    <property type="entry name" value="UBA-like_sf"/>
</dbReference>
<dbReference type="NCBIfam" id="TIGR00116">
    <property type="entry name" value="tsf"/>
    <property type="match status" value="1"/>
</dbReference>
<dbReference type="PANTHER" id="PTHR11741">
    <property type="entry name" value="ELONGATION FACTOR TS"/>
    <property type="match status" value="1"/>
</dbReference>
<dbReference type="PANTHER" id="PTHR11741:SF0">
    <property type="entry name" value="ELONGATION FACTOR TS, MITOCHONDRIAL"/>
    <property type="match status" value="1"/>
</dbReference>
<dbReference type="Pfam" id="PF00889">
    <property type="entry name" value="EF_TS"/>
    <property type="match status" value="1"/>
</dbReference>
<dbReference type="SUPFAM" id="SSF54713">
    <property type="entry name" value="Elongation factor Ts (EF-Ts), dimerisation domain"/>
    <property type="match status" value="1"/>
</dbReference>
<dbReference type="SUPFAM" id="SSF46934">
    <property type="entry name" value="UBA-like"/>
    <property type="match status" value="1"/>
</dbReference>
<dbReference type="PROSITE" id="PS01126">
    <property type="entry name" value="EF_TS_1"/>
    <property type="match status" value="1"/>
</dbReference>
<dbReference type="PROSITE" id="PS01127">
    <property type="entry name" value="EF_TS_2"/>
    <property type="match status" value="1"/>
</dbReference>
<sequence>MANISAADVKKLRELTGAGMMDCKKALEEADGDFEKAAELIRIKLGKKMAERGAEREASNGLVATSGGALVELNCETDFVAKGDDFVAAAQQIADAADEAKAGDVEALKAVRLGDKTVGEVVENLAITIGEKIELGRVAYFDGPVVAYMHKRAADLPPAVGVLVEYDGAEAGARGAAMQIAAMRPQYLTREEVPGDRVAKEREIAEATSREEGKPEQAIAKITEGRLNGFFKDVVLLEQPSVTESKKSVKAVLDEAGTTVKRFARFEVGA</sequence>